<dbReference type="EC" id="3.6.1.13"/>
<dbReference type="EC" id="3.6.1.16"/>
<dbReference type="EC" id="3.6.1.53"/>
<dbReference type="EMBL" id="AAFC03054081">
    <property type="status" value="NOT_ANNOTATED_CDS"/>
    <property type="molecule type" value="Genomic_DNA"/>
</dbReference>
<dbReference type="EMBL" id="BC151325">
    <property type="protein sequence ID" value="AAI51326.1"/>
    <property type="molecule type" value="mRNA"/>
</dbReference>
<dbReference type="SMR" id="A7YY53"/>
<dbReference type="FunCoup" id="A7YY53">
    <property type="interactions" value="816"/>
</dbReference>
<dbReference type="STRING" id="9913.ENSBTAP00000054570"/>
<dbReference type="PaxDb" id="9913-ENSBTAP00000056018"/>
<dbReference type="eggNOG" id="ENOG502QUQW">
    <property type="taxonomic scope" value="Eukaryota"/>
</dbReference>
<dbReference type="InParanoid" id="A7YY53"/>
<dbReference type="Proteomes" id="UP000009136">
    <property type="component" value="Unplaced"/>
</dbReference>
<dbReference type="GO" id="GO:0008663">
    <property type="term" value="F:2',3'-cyclic-nucleotide 2'-phosphodiesterase activity"/>
    <property type="evidence" value="ECO:0000318"/>
    <property type="project" value="GO_Central"/>
</dbReference>
<dbReference type="GO" id="GO:0047631">
    <property type="term" value="F:ADP-ribose diphosphatase activity"/>
    <property type="evidence" value="ECO:0000318"/>
    <property type="project" value="GO_Central"/>
</dbReference>
<dbReference type="GO" id="GO:0047734">
    <property type="term" value="F:CDP-glycerol diphosphatase activity"/>
    <property type="evidence" value="ECO:0000318"/>
    <property type="project" value="GO_Central"/>
</dbReference>
<dbReference type="GO" id="GO:0030145">
    <property type="term" value="F:manganese ion binding"/>
    <property type="evidence" value="ECO:0000318"/>
    <property type="project" value="GO_Central"/>
</dbReference>
<dbReference type="CDD" id="cd07396">
    <property type="entry name" value="MPP_Nbla03831"/>
    <property type="match status" value="1"/>
</dbReference>
<dbReference type="FunFam" id="3.60.21.10:FF:000067">
    <property type="entry name" value="Manganese-dependent ADP-ribose/CDP-alcohol diphosphatase"/>
    <property type="match status" value="1"/>
</dbReference>
<dbReference type="Gene3D" id="3.60.21.10">
    <property type="match status" value="1"/>
</dbReference>
<dbReference type="InterPro" id="IPR004843">
    <property type="entry name" value="Calcineurin-like_PHP_ApaH"/>
</dbReference>
<dbReference type="InterPro" id="IPR029052">
    <property type="entry name" value="Metallo-depent_PP-like"/>
</dbReference>
<dbReference type="InterPro" id="IPR041869">
    <property type="entry name" value="MPP_ADPRM"/>
</dbReference>
<dbReference type="PANTHER" id="PTHR16509">
    <property type="match status" value="1"/>
</dbReference>
<dbReference type="PANTHER" id="PTHR16509:SF1">
    <property type="entry name" value="MANGANESE-DEPENDENT ADP-RIBOSE_CDP-ALCOHOL DIPHOSPHATASE"/>
    <property type="match status" value="1"/>
</dbReference>
<dbReference type="Pfam" id="PF00149">
    <property type="entry name" value="Metallophos"/>
    <property type="match status" value="1"/>
</dbReference>
<dbReference type="SUPFAM" id="SSF56300">
    <property type="entry name" value="Metallo-dependent phosphatases"/>
    <property type="match status" value="1"/>
</dbReference>
<proteinExistence type="evidence at transcript level"/>
<protein>
    <recommendedName>
        <fullName>Manganese-dependent ADP-ribose/CDP-alcohol diphosphatase</fullName>
        <ecNumber>3.6.1.13</ecNumber>
        <ecNumber>3.6.1.16</ecNumber>
        <ecNumber>3.6.1.53</ecNumber>
    </recommendedName>
    <alternativeName>
        <fullName>ADPRibase-Mn</fullName>
    </alternativeName>
    <alternativeName>
        <fullName>CDP-choline phosphohydrolase</fullName>
    </alternativeName>
</protein>
<accession>A7YY53</accession>
<reference key="1">
    <citation type="journal article" date="2009" name="Science">
        <title>The genome sequence of taurine cattle: a window to ruminant biology and evolution.</title>
        <authorList>
            <consortium name="The bovine genome sequencing and analysis consortium"/>
        </authorList>
    </citation>
    <scope>NUCLEOTIDE SEQUENCE [LARGE SCALE GENOMIC DNA]</scope>
    <source>
        <strain>Hereford</strain>
    </source>
</reference>
<reference key="2">
    <citation type="submission" date="2007-07" db="EMBL/GenBank/DDBJ databases">
        <authorList>
            <consortium name="NIH - Mammalian Gene Collection (MGC) project"/>
        </authorList>
    </citation>
    <scope>NUCLEOTIDE SEQUENCE [LARGE SCALE MRNA] (ISOFORM 2)</scope>
    <source>
        <strain>Hereford</strain>
        <tissue>Fetal brain</tissue>
    </source>
</reference>
<comment type="function">
    <text evidence="1">Hydrolyzes ADP-ribose, IDP-ribose, CDP-glycerol, CDP-choline and CDP-ethanolamine, but not other non-reducing ADP-sugars or CDP-glucose. May be involved in immune cell signaling as suggested by the second-messenger role of ADP-ribose, which activates TRPM2 as a mediator of oxidative/nitrosative stress (By similarity).</text>
</comment>
<comment type="catalytic activity">
    <reaction>
        <text>CDP-choline + H2O = phosphocholine + CMP + 2 H(+)</text>
        <dbReference type="Rhea" id="RHEA:32487"/>
        <dbReference type="ChEBI" id="CHEBI:15377"/>
        <dbReference type="ChEBI" id="CHEBI:15378"/>
        <dbReference type="ChEBI" id="CHEBI:58779"/>
        <dbReference type="ChEBI" id="CHEBI:60377"/>
        <dbReference type="ChEBI" id="CHEBI:295975"/>
        <dbReference type="EC" id="3.6.1.53"/>
    </reaction>
</comment>
<comment type="catalytic activity">
    <reaction>
        <text>ADP-D-ribose + H2O = D-ribose 5-phosphate + AMP + 2 H(+)</text>
        <dbReference type="Rhea" id="RHEA:10412"/>
        <dbReference type="ChEBI" id="CHEBI:15377"/>
        <dbReference type="ChEBI" id="CHEBI:15378"/>
        <dbReference type="ChEBI" id="CHEBI:57967"/>
        <dbReference type="ChEBI" id="CHEBI:78346"/>
        <dbReference type="ChEBI" id="CHEBI:456215"/>
        <dbReference type="EC" id="3.6.1.13"/>
    </reaction>
</comment>
<comment type="catalytic activity">
    <reaction>
        <text>ADP-D-ribose + H2O = D-ribose 5-phosphate + AMP + 2 H(+)</text>
        <dbReference type="Rhea" id="RHEA:10412"/>
        <dbReference type="ChEBI" id="CHEBI:15377"/>
        <dbReference type="ChEBI" id="CHEBI:15378"/>
        <dbReference type="ChEBI" id="CHEBI:57967"/>
        <dbReference type="ChEBI" id="CHEBI:78346"/>
        <dbReference type="ChEBI" id="CHEBI:456215"/>
        <dbReference type="EC" id="3.6.1.53"/>
    </reaction>
</comment>
<comment type="catalytic activity">
    <reaction>
        <text>CDP-glycerol + H2O = sn-glycerol 3-phosphate + CMP + 2 H(+)</text>
        <dbReference type="Rhea" id="RHEA:21692"/>
        <dbReference type="ChEBI" id="CHEBI:15377"/>
        <dbReference type="ChEBI" id="CHEBI:15378"/>
        <dbReference type="ChEBI" id="CHEBI:57597"/>
        <dbReference type="ChEBI" id="CHEBI:58311"/>
        <dbReference type="ChEBI" id="CHEBI:60377"/>
        <dbReference type="EC" id="3.6.1.16"/>
    </reaction>
</comment>
<comment type="cofactor">
    <cofactor evidence="1">
        <name>Mg(2+)</name>
        <dbReference type="ChEBI" id="CHEBI:18420"/>
    </cofactor>
</comment>
<comment type="subunit">
    <text evidence="1">Monomer.</text>
</comment>
<comment type="alternative products">
    <event type="alternative splicing"/>
    <isoform>
        <id>A7YY53-1</id>
        <name>1</name>
        <sequence type="displayed"/>
    </isoform>
    <isoform>
        <id>A7YY53-2</id>
        <name>2</name>
        <sequence type="described" ref="VSP_036370"/>
    </isoform>
</comment>
<comment type="similarity">
    <text evidence="4">Belongs to the ADPRibase-Mn family.</text>
</comment>
<organism>
    <name type="scientific">Bos taurus</name>
    <name type="common">Bovine</name>
    <dbReference type="NCBI Taxonomy" id="9913"/>
    <lineage>
        <taxon>Eukaryota</taxon>
        <taxon>Metazoa</taxon>
        <taxon>Chordata</taxon>
        <taxon>Craniata</taxon>
        <taxon>Vertebrata</taxon>
        <taxon>Euteleostomi</taxon>
        <taxon>Mammalia</taxon>
        <taxon>Eutheria</taxon>
        <taxon>Laurasiatheria</taxon>
        <taxon>Artiodactyla</taxon>
        <taxon>Ruminantia</taxon>
        <taxon>Pecora</taxon>
        <taxon>Bovidae</taxon>
        <taxon>Bovinae</taxon>
        <taxon>Bos</taxon>
    </lineage>
</organism>
<evidence type="ECO:0000250" key="1"/>
<evidence type="ECO:0000250" key="2">
    <source>
        <dbReference type="UniProtKB" id="Q3LIE5"/>
    </source>
</evidence>
<evidence type="ECO:0000303" key="3">
    <source ref="2"/>
</evidence>
<evidence type="ECO:0000305" key="4"/>
<gene>
    <name type="primary">ADPRM</name>
</gene>
<sequence>MDYKPEPELHSESSERLFSFGVIADIQYADLEDGYNFQGNRRRYYRHSLLHLQGAIEHWNQERSPPRCVLQLGDIIDGYNAQYKASEKSLERVMNTFQMLRVPVHHTWGNHEFYNFSRDYLTNSKLNTKFLEDQIAHHPETVPSEDYYAYHFVPFPKFRFILLDAYDMSVLGVDQSSPKYQQCLKILREHNPNTELNSPQGLREPQFVQFNGGFSPEQLNWLNAVLTFSDRNQEKVVIVSHLPIYPEASDSVCLAWNYRDALAVIWSHKCVVCFFAGHTHDGGYSEDPYGVHHVNIEGVIETAPDSQAFGTVHVYPDKMMLEGRGRVPHRIMNYRKE</sequence>
<name>ADPRM_BOVIN</name>
<feature type="chain" id="PRO_0000363957" description="Manganese-dependent ADP-ribose/CDP-alcohol diphosphatase">
    <location>
        <begin position="1"/>
        <end position="337"/>
    </location>
</feature>
<feature type="binding site" evidence="1">
    <location>
        <position position="25"/>
    </location>
    <ligand>
        <name>Zn(2+)</name>
        <dbReference type="ChEBI" id="CHEBI:29105"/>
        <label>1</label>
    </ligand>
</feature>
<feature type="binding site" evidence="1">
    <location>
        <position position="27"/>
    </location>
    <ligand>
        <name>Zn(2+)</name>
        <dbReference type="ChEBI" id="CHEBI:29105"/>
        <label>1</label>
    </ligand>
</feature>
<feature type="binding site" evidence="1">
    <location>
        <position position="74"/>
    </location>
    <ligand>
        <name>Zn(2+)</name>
        <dbReference type="ChEBI" id="CHEBI:29105"/>
        <label>1</label>
    </ligand>
</feature>
<feature type="binding site" evidence="1">
    <location>
        <position position="74"/>
    </location>
    <ligand>
        <name>Zn(2+)</name>
        <dbReference type="ChEBI" id="CHEBI:29105"/>
        <label>2</label>
    </ligand>
</feature>
<feature type="binding site" evidence="1">
    <location>
        <position position="110"/>
    </location>
    <ligand>
        <name>Zn(2+)</name>
        <dbReference type="ChEBI" id="CHEBI:29105"/>
        <label>2</label>
    </ligand>
</feature>
<feature type="binding site" evidence="1">
    <location>
        <position position="241"/>
    </location>
    <ligand>
        <name>Zn(2+)</name>
        <dbReference type="ChEBI" id="CHEBI:29105"/>
        <label>2</label>
    </ligand>
</feature>
<feature type="binding site" evidence="1">
    <location>
        <position position="278"/>
    </location>
    <ligand>
        <name>Zn(2+)</name>
        <dbReference type="ChEBI" id="CHEBI:29105"/>
        <label>2</label>
    </ligand>
</feature>
<feature type="binding site" evidence="1">
    <location>
        <position position="280"/>
    </location>
    <ligand>
        <name>Zn(2+)</name>
        <dbReference type="ChEBI" id="CHEBI:29105"/>
        <label>1</label>
    </ligand>
</feature>
<feature type="modified residue" description="N-acetylmethionine" evidence="2">
    <location>
        <position position="1"/>
    </location>
</feature>
<feature type="splice variant" id="VSP_036370" description="In isoform 2." evidence="3">
    <original>LREPQFVQFNGGFSPEQLNWLNAVLTFSDRNQEKVVIVSHLPIYPEASDSVCLAWNYRDALAVIWSHKCVVCFFAGHTHDGGYSEDPYGVHHVNIEGVIETAPDSQAFGTVHVYPDKMMLEGRGRVPHRIMNYRKE</original>
    <variation>ELFL</variation>
    <location>
        <begin position="202"/>
        <end position="337"/>
    </location>
</feature>
<keyword id="KW-0007">Acetylation</keyword>
<keyword id="KW-0025">Alternative splicing</keyword>
<keyword id="KW-0378">Hydrolase</keyword>
<keyword id="KW-0479">Metal-binding</keyword>
<keyword id="KW-1185">Reference proteome</keyword>
<keyword id="KW-0862">Zinc</keyword>